<comment type="function">
    <text evidence="2">CGRP1/CALCA is a peptide hormone that induces vasodilation mediated by the CALCRL-RAMP1 receptor complex. Dilates a variety of vessels including the coronary, cerebral and systemic vasculature. Its abundance in the CNS also points toward a neurotransmitter or neuromodulator role. It also elevates platelet cAMP. CGRP1 can also bind and activate CALCR-RAMP1 (AMYR1) receptor complex.</text>
</comment>
<comment type="subcellular location">
    <subcellularLocation>
        <location evidence="2">Secreted</location>
    </subcellularLocation>
</comment>
<comment type="alternative products">
    <event type="alternative splicing"/>
    <isoform>
        <id>P10286-1</id>
        <name>Calcitonin-gene related peptide</name>
        <sequence type="displayed"/>
    </isoform>
    <isoform>
        <id>P07660-1</id>
        <name>Calcitonin</name>
        <sequence type="external"/>
    </isoform>
</comment>
<comment type="similarity">
    <text evidence="4">Belongs to the calcitonin family.</text>
</comment>
<gene>
    <name type="primary">CALCA</name>
    <name type="synonym">CALC</name>
</gene>
<protein>
    <recommendedName>
        <fullName>Calcitonin gene-related peptide 1</fullName>
        <shortName evidence="2">CGRP1</shortName>
    </recommendedName>
    <alternativeName>
        <fullName>Calcitonin gene-related peptide</fullName>
        <shortName>CGRP</shortName>
    </alternativeName>
</protein>
<feature type="signal peptide" evidence="3">
    <location>
        <begin position="1"/>
        <end position="25"/>
    </location>
</feature>
<feature type="propeptide" id="PRO_0000004074">
    <location>
        <begin position="26"/>
        <end position="77"/>
    </location>
</feature>
<feature type="peptide" id="PRO_0000004075" description="Calcitonin gene-related peptide 1">
    <location>
        <begin position="80"/>
        <end position="116"/>
    </location>
</feature>
<feature type="propeptide" id="PRO_0000004076">
    <location>
        <begin position="122"/>
        <end position="125"/>
    </location>
</feature>
<feature type="modified residue" description="Phenylalanine amide" evidence="1">
    <location>
        <position position="116"/>
    </location>
</feature>
<feature type="disulfide bond" evidence="2">
    <location>
        <begin position="81"/>
        <end position="86"/>
    </location>
</feature>
<feature type="sequence conflict" description="In Ref. 2; CAA26796." evidence="4" ref="2">
    <original>D</original>
    <variation>E</variation>
    <location>
        <position position="56"/>
    </location>
</feature>
<accession>P10286</accession>
<organism>
    <name type="scientific">Gallus gallus</name>
    <name type="common">Chicken</name>
    <dbReference type="NCBI Taxonomy" id="9031"/>
    <lineage>
        <taxon>Eukaryota</taxon>
        <taxon>Metazoa</taxon>
        <taxon>Chordata</taxon>
        <taxon>Craniata</taxon>
        <taxon>Vertebrata</taxon>
        <taxon>Euteleostomi</taxon>
        <taxon>Archelosauria</taxon>
        <taxon>Archosauria</taxon>
        <taxon>Dinosauria</taxon>
        <taxon>Saurischia</taxon>
        <taxon>Theropoda</taxon>
        <taxon>Coelurosauria</taxon>
        <taxon>Aves</taxon>
        <taxon>Neognathae</taxon>
        <taxon>Galloanserae</taxon>
        <taxon>Galliformes</taxon>
        <taxon>Phasianidae</taxon>
        <taxon>Phasianinae</taxon>
        <taxon>Gallus</taxon>
    </lineage>
</organism>
<sequence length="125" mass="13729">MVMLKISSFLAVYALVVCQMDSFQAAPVRPGLESITDRVTLSDYEARRLLNALVKDFIQMTAEELEQASEGNSVTAQKRACNTATCVTHRLADFLSRSGGVGKNNFVPTNVGSKAFGRRRRSVQI</sequence>
<dbReference type="EMBL" id="X06311">
    <property type="protein sequence ID" value="CAA29630.1"/>
    <property type="molecule type" value="Genomic_DNA"/>
</dbReference>
<dbReference type="EMBL" id="X06312">
    <property type="status" value="NOT_ANNOTATED_CDS"/>
    <property type="molecule type" value="Genomic_DNA"/>
</dbReference>
<dbReference type="EMBL" id="X06314">
    <property type="protein sequence ID" value="CAA29633.1"/>
    <property type="molecule type" value="Genomic_DNA"/>
</dbReference>
<dbReference type="EMBL" id="X03012">
    <property type="protein sequence ID" value="CAA26796.1"/>
    <property type="status" value="ALT_TERM"/>
    <property type="molecule type" value="mRNA"/>
</dbReference>
<dbReference type="EMBL" id="D00007">
    <property type="protein sequence ID" value="BAA00006.1"/>
    <property type="molecule type" value="Genomic_DNA"/>
</dbReference>
<dbReference type="PIR" id="S00154">
    <property type="entry name" value="TCCHRP"/>
</dbReference>
<dbReference type="SMR" id="P10286"/>
<dbReference type="FunCoup" id="P10286">
    <property type="interactions" value="8"/>
</dbReference>
<dbReference type="VEuPathDB" id="HostDB:geneid_396256"/>
<dbReference type="InParanoid" id="P10286"/>
<dbReference type="Proteomes" id="UP000000539">
    <property type="component" value="Unassembled WGS sequence"/>
</dbReference>
<dbReference type="GO" id="GO:0005615">
    <property type="term" value="C:extracellular space"/>
    <property type="evidence" value="ECO:0000318"/>
    <property type="project" value="GO_Central"/>
</dbReference>
<dbReference type="GO" id="GO:0031716">
    <property type="term" value="F:calcitonin receptor binding"/>
    <property type="evidence" value="ECO:0000318"/>
    <property type="project" value="GO_Central"/>
</dbReference>
<dbReference type="GO" id="GO:0005179">
    <property type="term" value="F:hormone activity"/>
    <property type="evidence" value="ECO:0007669"/>
    <property type="project" value="UniProtKB-KW"/>
</dbReference>
<dbReference type="GO" id="GO:0007189">
    <property type="term" value="P:adenylate cyclase-activating G protein-coupled receptor signaling pathway"/>
    <property type="evidence" value="ECO:0000318"/>
    <property type="project" value="GO_Central"/>
</dbReference>
<dbReference type="GO" id="GO:0051480">
    <property type="term" value="P:regulation of cytosolic calcium ion concentration"/>
    <property type="evidence" value="ECO:0000318"/>
    <property type="project" value="GO_Central"/>
</dbReference>
<dbReference type="Gene3D" id="6.10.250.2190">
    <property type="match status" value="1"/>
</dbReference>
<dbReference type="InterPro" id="IPR021117">
    <property type="entry name" value="Calcitonin-like"/>
</dbReference>
<dbReference type="InterPro" id="IPR021116">
    <property type="entry name" value="Calcitonin/adrenomedullin"/>
</dbReference>
<dbReference type="InterPro" id="IPR018360">
    <property type="entry name" value="Calcitonin_CS"/>
</dbReference>
<dbReference type="InterPro" id="IPR015476">
    <property type="entry name" value="Calcitonin_gene-rel_peptide"/>
</dbReference>
<dbReference type="InterPro" id="IPR001693">
    <property type="entry name" value="Calcitonin_peptide-like"/>
</dbReference>
<dbReference type="PANTHER" id="PTHR10505:SF16">
    <property type="entry name" value="CALCITONIN"/>
    <property type="match status" value="1"/>
</dbReference>
<dbReference type="PANTHER" id="PTHR10505">
    <property type="entry name" value="CALCITONIN-RELATED"/>
    <property type="match status" value="1"/>
</dbReference>
<dbReference type="Pfam" id="PF00214">
    <property type="entry name" value="Calc_CGRP_IAPP"/>
    <property type="match status" value="1"/>
</dbReference>
<dbReference type="PRINTS" id="PR00817">
    <property type="entry name" value="CALCITONINB"/>
</dbReference>
<dbReference type="SMART" id="SM00113">
    <property type="entry name" value="CALCITONIN"/>
    <property type="match status" value="1"/>
</dbReference>
<dbReference type="PROSITE" id="PS00258">
    <property type="entry name" value="CALCITONIN"/>
    <property type="match status" value="1"/>
</dbReference>
<proteinExistence type="evidence at transcript level"/>
<reference key="1">
    <citation type="journal article" date="1987" name="FEBS Lett.">
        <title>Sequence and expression of the chicken calcitonin gene.</title>
        <authorList>
            <person name="Minvielle S."/>
            <person name="Cressent M."/>
            <person name="Delehaye M.C."/>
            <person name="Segond N."/>
            <person name="Milhaud G."/>
            <person name="Jullienne A."/>
            <person name="Moukhtar M.S."/>
            <person name="Lasmoles F."/>
        </authorList>
    </citation>
    <scope>NUCLEOTIDE SEQUENCE [GENOMIC DNA]</scope>
</reference>
<reference key="2">
    <citation type="journal article" date="1985" name="EMBO J.">
        <title>Elucidation of the nucleotide sequence of chicken calcitonin mRNA: direct evidence for the expression of a lower vertebrate calcitonin-like gene in man and rat.</title>
        <authorList>
            <person name="Lasmoles F."/>
            <person name="Jullienne A."/>
            <person name="Day F."/>
            <person name="Minvielle S."/>
            <person name="Milhaud G."/>
            <person name="Moukhtar M.S."/>
        </authorList>
    </citation>
    <scope>NUCLEOTIDE SEQUENCE [MRNA] OF 12-73</scope>
</reference>
<reference key="3">
    <citation type="journal article" date="1986" name="FEBS Lett.">
        <title>Isolation and partial characterization of the calcitonin gene in a lower vertebrate. Predicted structure of avian calcitonin gene-related peptide.</title>
        <authorList>
            <person name="Minvielle S."/>
            <person name="Cressent M."/>
            <person name="Lasmoles F."/>
            <person name="Jullienne A."/>
            <person name="Milhaud G."/>
            <person name="Moukhtar M.S."/>
        </authorList>
    </citation>
    <scope>NUCLEOTIDE SEQUENCE [GENOMIC DNA] OF 74-125</scope>
</reference>
<name>CALCA_CHICK</name>
<evidence type="ECO:0000250" key="1"/>
<evidence type="ECO:0000250" key="2">
    <source>
        <dbReference type="UniProtKB" id="P06881"/>
    </source>
</evidence>
<evidence type="ECO:0000255" key="3"/>
<evidence type="ECO:0000305" key="4"/>
<keyword id="KW-0025">Alternative splicing</keyword>
<keyword id="KW-0027">Amidation</keyword>
<keyword id="KW-0165">Cleavage on pair of basic residues</keyword>
<keyword id="KW-1015">Disulfide bond</keyword>
<keyword id="KW-0372">Hormone</keyword>
<keyword id="KW-1185">Reference proteome</keyword>
<keyword id="KW-0964">Secreted</keyword>
<keyword id="KW-0732">Signal</keyword>